<gene>
    <name type="primary">yidC</name>
    <name type="ordered locus">BL0644</name>
</gene>
<name>YIDC_BIFLO</name>
<protein>
    <recommendedName>
        <fullName>Membrane protein insertase YidC</fullName>
    </recommendedName>
    <alternativeName>
        <fullName>Foldase YidC</fullName>
    </alternativeName>
    <alternativeName>
        <fullName>Membrane integrase YidC</fullName>
    </alternativeName>
    <alternativeName>
        <fullName>Membrane protein YidC</fullName>
    </alternativeName>
</protein>
<evidence type="ECO:0000250" key="1"/>
<evidence type="ECO:0000255" key="2"/>
<evidence type="ECO:0000256" key="3">
    <source>
        <dbReference type="SAM" id="MobiDB-lite"/>
    </source>
</evidence>
<evidence type="ECO:0000305" key="4"/>
<sequence>MNSNEFLLDSGFWGFLYKILTPVEWLQTWIMKIVHDFFVMLGVSPIGVSWVLAIIILVLVVQACIFPLFYKQMKSMRKMQALAPKMQRIQNKYKGKTDQASREAMSRETMKLYQDNDVNPAGSCLPMLIQGPVFMSMFYTLSAIPYIANGKRDALGAFDVATAKQFTQTDVFGIVSVTDNFTSAAASGKAVIGIFVFLMCFCLWFMQYFSMKRNMAAASMNKQTETMQKAMLWLFPVMYIFSGVAMPFAVLVYWLTNNVCNLCRTLWQVYAFPTPGSPAAADKEKRDHRNENARRAKAGLPSLEEEALAKAKEEAERKATQGYQRQQPVRKRKKK</sequence>
<proteinExistence type="inferred from homology"/>
<reference key="1">
    <citation type="journal article" date="2002" name="Proc. Natl. Acad. Sci. U.S.A.">
        <title>The genome sequence of Bifidobacterium longum reflects its adaptation to the human gastrointestinal tract.</title>
        <authorList>
            <person name="Schell M.A."/>
            <person name="Karmirantzou M."/>
            <person name="Snel B."/>
            <person name="Vilanova D."/>
            <person name="Berger B."/>
            <person name="Pessi G."/>
            <person name="Zwahlen M.-C."/>
            <person name="Desiere F."/>
            <person name="Bork P."/>
            <person name="Delley M."/>
            <person name="Pridmore R.D."/>
            <person name="Arigoni F."/>
        </authorList>
    </citation>
    <scope>NUCLEOTIDE SEQUENCE [LARGE SCALE GENOMIC DNA]</scope>
    <source>
        <strain>NCC 2705</strain>
    </source>
</reference>
<dbReference type="EMBL" id="AE014295">
    <property type="protein sequence ID" value="AAN24466.1"/>
    <property type="molecule type" value="Genomic_DNA"/>
</dbReference>
<dbReference type="RefSeq" id="NP_695830.1">
    <property type="nucleotide sequence ID" value="NC_004307.2"/>
</dbReference>
<dbReference type="RefSeq" id="WP_007051771.1">
    <property type="nucleotide sequence ID" value="NC_004307.2"/>
</dbReference>
<dbReference type="SMR" id="Q8G6J6"/>
<dbReference type="STRING" id="206672.BL0644"/>
<dbReference type="EnsemblBacteria" id="AAN24466">
    <property type="protein sequence ID" value="AAN24466"/>
    <property type="gene ID" value="BL0644"/>
</dbReference>
<dbReference type="GeneID" id="69579146"/>
<dbReference type="KEGG" id="blo:BL0644"/>
<dbReference type="PATRIC" id="fig|206672.9.peg.1375"/>
<dbReference type="HOGENOM" id="CLU_036138_3_1_11"/>
<dbReference type="OrthoDB" id="9780552at2"/>
<dbReference type="PhylomeDB" id="Q8G6J6"/>
<dbReference type="Proteomes" id="UP000000439">
    <property type="component" value="Chromosome"/>
</dbReference>
<dbReference type="GO" id="GO:0005886">
    <property type="term" value="C:plasma membrane"/>
    <property type="evidence" value="ECO:0007669"/>
    <property type="project" value="UniProtKB-SubCell"/>
</dbReference>
<dbReference type="GO" id="GO:0032977">
    <property type="term" value="F:membrane insertase activity"/>
    <property type="evidence" value="ECO:0007669"/>
    <property type="project" value="InterPro"/>
</dbReference>
<dbReference type="GO" id="GO:0051205">
    <property type="term" value="P:protein insertion into membrane"/>
    <property type="evidence" value="ECO:0007669"/>
    <property type="project" value="TreeGrafter"/>
</dbReference>
<dbReference type="GO" id="GO:0015031">
    <property type="term" value="P:protein transport"/>
    <property type="evidence" value="ECO:0007669"/>
    <property type="project" value="UniProtKB-KW"/>
</dbReference>
<dbReference type="CDD" id="cd20070">
    <property type="entry name" value="5TM_YidC_Alb3"/>
    <property type="match status" value="1"/>
</dbReference>
<dbReference type="InterPro" id="IPR001708">
    <property type="entry name" value="YidC/ALB3/OXA1/COX18"/>
</dbReference>
<dbReference type="InterPro" id="IPR028055">
    <property type="entry name" value="YidC/Oxa/ALB_C"/>
</dbReference>
<dbReference type="InterPro" id="IPR047196">
    <property type="entry name" value="YidC_ALB_C"/>
</dbReference>
<dbReference type="NCBIfam" id="TIGR03592">
    <property type="entry name" value="yidC_oxa1_cterm"/>
    <property type="match status" value="1"/>
</dbReference>
<dbReference type="PANTHER" id="PTHR12428:SF65">
    <property type="entry name" value="CYTOCHROME C OXIDASE ASSEMBLY PROTEIN COX18, MITOCHONDRIAL"/>
    <property type="match status" value="1"/>
</dbReference>
<dbReference type="PANTHER" id="PTHR12428">
    <property type="entry name" value="OXA1"/>
    <property type="match status" value="1"/>
</dbReference>
<dbReference type="Pfam" id="PF02096">
    <property type="entry name" value="60KD_IMP"/>
    <property type="match status" value="1"/>
</dbReference>
<accession>Q8G6J6</accession>
<feature type="chain" id="PRO_0000124688" description="Membrane protein insertase YidC">
    <location>
        <begin position="1"/>
        <end position="335"/>
    </location>
</feature>
<feature type="transmembrane region" description="Helical" evidence="2">
    <location>
        <begin position="46"/>
        <end position="66"/>
    </location>
</feature>
<feature type="transmembrane region" description="Helical" evidence="2">
    <location>
        <begin position="127"/>
        <end position="147"/>
    </location>
</feature>
<feature type="transmembrane region" description="Helical" evidence="2">
    <location>
        <begin position="191"/>
        <end position="211"/>
    </location>
</feature>
<feature type="transmembrane region" description="Helical" evidence="2">
    <location>
        <begin position="232"/>
        <end position="252"/>
    </location>
</feature>
<feature type="region of interest" description="Disordered" evidence="3">
    <location>
        <begin position="277"/>
        <end position="335"/>
    </location>
</feature>
<feature type="compositionally biased region" description="Basic and acidic residues" evidence="3">
    <location>
        <begin position="281"/>
        <end position="294"/>
    </location>
</feature>
<feature type="compositionally biased region" description="Basic and acidic residues" evidence="3">
    <location>
        <begin position="307"/>
        <end position="319"/>
    </location>
</feature>
<keyword id="KW-1003">Cell membrane</keyword>
<keyword id="KW-0143">Chaperone</keyword>
<keyword id="KW-0472">Membrane</keyword>
<keyword id="KW-0653">Protein transport</keyword>
<keyword id="KW-1185">Reference proteome</keyword>
<keyword id="KW-0812">Transmembrane</keyword>
<keyword id="KW-1133">Transmembrane helix</keyword>
<keyword id="KW-0813">Transport</keyword>
<comment type="function">
    <text evidence="1">Required for the insertion and/or proper folding and/or complex formation of integral membrane proteins into the membrane. Involved in integration of membrane proteins that insert both dependently and independently of the Sec translocase complex, as well as at least some lipoproteins. Aids folding of multispanning membrane proteins (By similarity).</text>
</comment>
<comment type="subunit">
    <text evidence="1">Interacts with the Sec translocase complex via SecD. Specifically interacts with transmembrane segments of nascent integral membrane proteins during membrane integration (By similarity).</text>
</comment>
<comment type="subcellular location">
    <subcellularLocation>
        <location evidence="1">Cell membrane</location>
        <topology evidence="1">Multi-pass membrane protein</topology>
    </subcellularLocation>
</comment>
<comment type="similarity">
    <text evidence="4">Belongs to the OXA1/ALB3/YidC family. Type 1 subfamily.</text>
</comment>
<organism>
    <name type="scientific">Bifidobacterium longum (strain NCC 2705)</name>
    <dbReference type="NCBI Taxonomy" id="206672"/>
    <lineage>
        <taxon>Bacteria</taxon>
        <taxon>Bacillati</taxon>
        <taxon>Actinomycetota</taxon>
        <taxon>Actinomycetes</taxon>
        <taxon>Bifidobacteriales</taxon>
        <taxon>Bifidobacteriaceae</taxon>
        <taxon>Bifidobacterium</taxon>
    </lineage>
</organism>